<gene>
    <name evidence="1" type="primary">rpsP</name>
    <name type="ordered locus">LBA1289</name>
</gene>
<comment type="similarity">
    <text evidence="1">Belongs to the bacterial ribosomal protein bS16 family.</text>
</comment>
<reference key="1">
    <citation type="journal article" date="2005" name="Proc. Natl. Acad. Sci. U.S.A.">
        <title>Complete genome sequence of the probiotic lactic acid bacterium Lactobacillus acidophilus NCFM.</title>
        <authorList>
            <person name="Altermann E."/>
            <person name="Russell W.M."/>
            <person name="Azcarate-Peril M.A."/>
            <person name="Barrangou R."/>
            <person name="Buck B.L."/>
            <person name="McAuliffe O."/>
            <person name="Souther N."/>
            <person name="Dobson A."/>
            <person name="Duong T."/>
            <person name="Callanan M."/>
            <person name="Lick S."/>
            <person name="Hamrick A."/>
            <person name="Cano R."/>
            <person name="Klaenhammer T.R."/>
        </authorList>
    </citation>
    <scope>NUCLEOTIDE SEQUENCE [LARGE SCALE GENOMIC DNA]</scope>
    <source>
        <strain>ATCC 700396 / NCK56 / N2 / NCFM</strain>
    </source>
</reference>
<proteinExistence type="inferred from homology"/>
<protein>
    <recommendedName>
        <fullName evidence="1">Small ribosomal subunit protein bS16</fullName>
    </recommendedName>
    <alternativeName>
        <fullName evidence="2">30S ribosomal protein S16</fullName>
    </alternativeName>
</protein>
<accession>Q5FJK5</accession>
<keyword id="KW-1185">Reference proteome</keyword>
<keyword id="KW-0687">Ribonucleoprotein</keyword>
<keyword id="KW-0689">Ribosomal protein</keyword>
<sequence length="90" mass="10365">MSVKIRMHRAGAKRKPFYRIVVADSRMPRDGRFIEQVGYYNPVSQPKELKLDEDKIFEWLQKGAQPSDTVRSLLSGAGLMAKLHDAKYNK</sequence>
<name>RS16_LACAC</name>
<dbReference type="EMBL" id="CP000033">
    <property type="protein sequence ID" value="AAV43119.1"/>
    <property type="molecule type" value="Genomic_DNA"/>
</dbReference>
<dbReference type="RefSeq" id="WP_003547870.1">
    <property type="nucleotide sequence ID" value="NC_006814.3"/>
</dbReference>
<dbReference type="RefSeq" id="YP_194150.1">
    <property type="nucleotide sequence ID" value="NC_006814.3"/>
</dbReference>
<dbReference type="SMR" id="Q5FJK5"/>
<dbReference type="STRING" id="272621.LBA1289"/>
<dbReference type="GeneID" id="93289624"/>
<dbReference type="KEGG" id="lac:LBA1289"/>
<dbReference type="PATRIC" id="fig|272621.13.peg.1221"/>
<dbReference type="eggNOG" id="COG0228">
    <property type="taxonomic scope" value="Bacteria"/>
</dbReference>
<dbReference type="HOGENOM" id="CLU_100590_5_0_9"/>
<dbReference type="OrthoDB" id="9807878at2"/>
<dbReference type="BioCyc" id="LACI272621:G1G49-1269-MONOMER"/>
<dbReference type="PRO" id="PR:Q5FJK5"/>
<dbReference type="Proteomes" id="UP000006381">
    <property type="component" value="Chromosome"/>
</dbReference>
<dbReference type="GO" id="GO:0005737">
    <property type="term" value="C:cytoplasm"/>
    <property type="evidence" value="ECO:0007669"/>
    <property type="project" value="UniProtKB-ARBA"/>
</dbReference>
<dbReference type="GO" id="GO:0015935">
    <property type="term" value="C:small ribosomal subunit"/>
    <property type="evidence" value="ECO:0007669"/>
    <property type="project" value="TreeGrafter"/>
</dbReference>
<dbReference type="GO" id="GO:0003735">
    <property type="term" value="F:structural constituent of ribosome"/>
    <property type="evidence" value="ECO:0007669"/>
    <property type="project" value="InterPro"/>
</dbReference>
<dbReference type="GO" id="GO:0006412">
    <property type="term" value="P:translation"/>
    <property type="evidence" value="ECO:0007669"/>
    <property type="project" value="UniProtKB-UniRule"/>
</dbReference>
<dbReference type="FunFam" id="3.30.1320.10:FF:000002">
    <property type="entry name" value="30S ribosomal protein S16"/>
    <property type="match status" value="1"/>
</dbReference>
<dbReference type="Gene3D" id="3.30.1320.10">
    <property type="match status" value="1"/>
</dbReference>
<dbReference type="HAMAP" id="MF_00385">
    <property type="entry name" value="Ribosomal_bS16"/>
    <property type="match status" value="1"/>
</dbReference>
<dbReference type="InterPro" id="IPR000307">
    <property type="entry name" value="Ribosomal_bS16"/>
</dbReference>
<dbReference type="InterPro" id="IPR023803">
    <property type="entry name" value="Ribosomal_bS16_dom_sf"/>
</dbReference>
<dbReference type="NCBIfam" id="TIGR00002">
    <property type="entry name" value="S16"/>
    <property type="match status" value="1"/>
</dbReference>
<dbReference type="PANTHER" id="PTHR12919">
    <property type="entry name" value="30S RIBOSOMAL PROTEIN S16"/>
    <property type="match status" value="1"/>
</dbReference>
<dbReference type="PANTHER" id="PTHR12919:SF20">
    <property type="entry name" value="SMALL RIBOSOMAL SUBUNIT PROTEIN BS16M"/>
    <property type="match status" value="1"/>
</dbReference>
<dbReference type="Pfam" id="PF00886">
    <property type="entry name" value="Ribosomal_S16"/>
    <property type="match status" value="1"/>
</dbReference>
<dbReference type="SUPFAM" id="SSF54565">
    <property type="entry name" value="Ribosomal protein S16"/>
    <property type="match status" value="1"/>
</dbReference>
<feature type="chain" id="PRO_0000243817" description="Small ribosomal subunit protein bS16">
    <location>
        <begin position="1"/>
        <end position="90"/>
    </location>
</feature>
<evidence type="ECO:0000255" key="1">
    <source>
        <dbReference type="HAMAP-Rule" id="MF_00385"/>
    </source>
</evidence>
<evidence type="ECO:0000305" key="2"/>
<organism>
    <name type="scientific">Lactobacillus acidophilus (strain ATCC 700396 / NCK56 / N2 / NCFM)</name>
    <dbReference type="NCBI Taxonomy" id="272621"/>
    <lineage>
        <taxon>Bacteria</taxon>
        <taxon>Bacillati</taxon>
        <taxon>Bacillota</taxon>
        <taxon>Bacilli</taxon>
        <taxon>Lactobacillales</taxon>
        <taxon>Lactobacillaceae</taxon>
        <taxon>Lactobacillus</taxon>
    </lineage>
</organism>